<proteinExistence type="evidence at transcript level"/>
<protein>
    <recommendedName>
        <fullName>Outer membrane usher protein YraJ</fullName>
    </recommendedName>
</protein>
<evidence type="ECO:0000250" key="1"/>
<evidence type="ECO:0000255" key="2"/>
<evidence type="ECO:0000269" key="3">
    <source>
    </source>
</evidence>
<evidence type="ECO:0000305" key="4"/>
<evidence type="ECO:0000305" key="5">
    <source>
    </source>
</evidence>
<reference key="1">
    <citation type="journal article" date="1997" name="Science">
        <title>The complete genome sequence of Escherichia coli K-12.</title>
        <authorList>
            <person name="Blattner F.R."/>
            <person name="Plunkett G. III"/>
            <person name="Bloch C.A."/>
            <person name="Perna N.T."/>
            <person name="Burland V."/>
            <person name="Riley M."/>
            <person name="Collado-Vides J."/>
            <person name="Glasner J.D."/>
            <person name="Rode C.K."/>
            <person name="Mayhew G.F."/>
            <person name="Gregor J."/>
            <person name="Davis N.W."/>
            <person name="Kirkpatrick H.A."/>
            <person name="Goeden M.A."/>
            <person name="Rose D.J."/>
            <person name="Mau B."/>
            <person name="Shao Y."/>
        </authorList>
    </citation>
    <scope>NUCLEOTIDE SEQUENCE [LARGE SCALE GENOMIC DNA]</scope>
    <source>
        <strain>K12 / MG1655 / ATCC 47076</strain>
    </source>
</reference>
<reference key="2">
    <citation type="journal article" date="2006" name="Mol. Syst. Biol.">
        <title>Highly accurate genome sequences of Escherichia coli K-12 strains MG1655 and W3110.</title>
        <authorList>
            <person name="Hayashi K."/>
            <person name="Morooka N."/>
            <person name="Yamamoto Y."/>
            <person name="Fujita K."/>
            <person name="Isono K."/>
            <person name="Choi S."/>
            <person name="Ohtsubo E."/>
            <person name="Baba T."/>
            <person name="Wanner B.L."/>
            <person name="Mori H."/>
            <person name="Horiuchi T."/>
        </authorList>
    </citation>
    <scope>NUCLEOTIDE SEQUENCE [LARGE SCALE GENOMIC DNA]</scope>
    <source>
        <strain>K12 / W3110 / ATCC 27325 / DSM 5911</strain>
    </source>
</reference>
<reference key="3">
    <citation type="journal article" date="2010" name="Environ. Microbiol.">
        <title>Escherichia coli K-12 possesses multiple cryptic but functional chaperone-usher fimbriae with distinct surface specificities.</title>
        <authorList>
            <person name="Korea C.G."/>
            <person name="Badouraly R."/>
            <person name="Prevost M.C."/>
            <person name="Ghigo J.M."/>
            <person name="Beloin C."/>
        </authorList>
    </citation>
    <scope>FUNCTION</scope>
    <scope>INDUCTION</scope>
    <scope>DISRUPTION PHENOTYPE</scope>
    <source>
        <strain>K12 / MG1655 / ATCC 47076</strain>
    </source>
</reference>
<gene>
    <name type="primary">yraJ</name>
    <name type="ordered locus">b3144</name>
    <name type="ordered locus">JW3113</name>
</gene>
<dbReference type="EMBL" id="U18997">
    <property type="protein sequence ID" value="AAA57947.1"/>
    <property type="status" value="ALT_INIT"/>
    <property type="molecule type" value="Genomic_DNA"/>
</dbReference>
<dbReference type="EMBL" id="U00096">
    <property type="protein sequence ID" value="AAC76178.1"/>
    <property type="molecule type" value="Genomic_DNA"/>
</dbReference>
<dbReference type="EMBL" id="AP009048">
    <property type="protein sequence ID" value="BAE77190.1"/>
    <property type="molecule type" value="Genomic_DNA"/>
</dbReference>
<dbReference type="PIR" id="D65104">
    <property type="entry name" value="D65104"/>
</dbReference>
<dbReference type="RefSeq" id="NP_417613.1">
    <property type="nucleotide sequence ID" value="NC_000913.3"/>
</dbReference>
<dbReference type="RefSeq" id="WP_001355538.1">
    <property type="nucleotide sequence ID" value="NZ_LN832404.1"/>
</dbReference>
<dbReference type="SMR" id="P42915"/>
<dbReference type="BioGRID" id="4261988">
    <property type="interactions" value="145"/>
</dbReference>
<dbReference type="FunCoup" id="P42915">
    <property type="interactions" value="132"/>
</dbReference>
<dbReference type="STRING" id="511145.b3144"/>
<dbReference type="TCDB" id="1.B.11.3.6">
    <property type="family name" value="the outer membrane fimbrial usher porin (fup) family"/>
</dbReference>
<dbReference type="PaxDb" id="511145-b3144"/>
<dbReference type="EnsemblBacteria" id="AAC76178">
    <property type="protein sequence ID" value="AAC76178"/>
    <property type="gene ID" value="b3144"/>
</dbReference>
<dbReference type="GeneID" id="947656"/>
<dbReference type="KEGG" id="ecj:JW3113"/>
<dbReference type="KEGG" id="eco:b3144"/>
<dbReference type="KEGG" id="ecoc:C3026_17130"/>
<dbReference type="PATRIC" id="fig|1411691.4.peg.3586"/>
<dbReference type="EchoBASE" id="EB2628"/>
<dbReference type="eggNOG" id="COG3188">
    <property type="taxonomic scope" value="Bacteria"/>
</dbReference>
<dbReference type="HOGENOM" id="CLU_009120_3_1_6"/>
<dbReference type="InParanoid" id="P42915"/>
<dbReference type="OMA" id="TAYHRND"/>
<dbReference type="OrthoDB" id="6554712at2"/>
<dbReference type="PhylomeDB" id="P42915"/>
<dbReference type="BioCyc" id="EcoCyc:G7639-MONOMER"/>
<dbReference type="PRO" id="PR:P42915"/>
<dbReference type="Proteomes" id="UP000000625">
    <property type="component" value="Chromosome"/>
</dbReference>
<dbReference type="GO" id="GO:0009279">
    <property type="term" value="C:cell outer membrane"/>
    <property type="evidence" value="ECO:0000318"/>
    <property type="project" value="GO_Central"/>
</dbReference>
<dbReference type="GO" id="GO:0015473">
    <property type="term" value="F:fimbrial usher porin activity"/>
    <property type="evidence" value="ECO:0000318"/>
    <property type="project" value="GO_Central"/>
</dbReference>
<dbReference type="GO" id="GO:0006974">
    <property type="term" value="P:DNA damage response"/>
    <property type="evidence" value="ECO:0000270"/>
    <property type="project" value="EcoliWiki"/>
</dbReference>
<dbReference type="GO" id="GO:0009297">
    <property type="term" value="P:pilus assembly"/>
    <property type="evidence" value="ECO:0000318"/>
    <property type="project" value="GO_Central"/>
</dbReference>
<dbReference type="FunFam" id="3.10.20.410:FF:000001">
    <property type="entry name" value="Fimbrial outer membrane usher protein"/>
    <property type="match status" value="1"/>
</dbReference>
<dbReference type="FunFam" id="2.60.40.2610:FF:000001">
    <property type="entry name" value="Outer membrane fimbrial usher protein"/>
    <property type="match status" value="1"/>
</dbReference>
<dbReference type="FunFam" id="2.60.40.3110:FF:000001">
    <property type="entry name" value="Putative fimbrial outer membrane usher"/>
    <property type="match status" value="1"/>
</dbReference>
<dbReference type="Gene3D" id="2.60.40.2070">
    <property type="match status" value="1"/>
</dbReference>
<dbReference type="Gene3D" id="2.60.40.3110">
    <property type="match status" value="1"/>
</dbReference>
<dbReference type="Gene3D" id="3.10.20.410">
    <property type="match status" value="1"/>
</dbReference>
<dbReference type="Gene3D" id="2.60.40.2610">
    <property type="entry name" value="Outer membrane usher protein FimD, plug domain"/>
    <property type="match status" value="1"/>
</dbReference>
<dbReference type="InterPro" id="IPR000015">
    <property type="entry name" value="Fimb_usher"/>
</dbReference>
<dbReference type="InterPro" id="IPR018030">
    <property type="entry name" value="Fimbrial_membr_usher_CS"/>
</dbReference>
<dbReference type="InterPro" id="IPR042186">
    <property type="entry name" value="FimD_plug_dom"/>
</dbReference>
<dbReference type="InterPro" id="IPR025949">
    <property type="entry name" value="PapC-like_C"/>
</dbReference>
<dbReference type="InterPro" id="IPR043142">
    <property type="entry name" value="PapC-like_C_sf"/>
</dbReference>
<dbReference type="InterPro" id="IPR025885">
    <property type="entry name" value="PapC_N"/>
</dbReference>
<dbReference type="InterPro" id="IPR037224">
    <property type="entry name" value="PapC_N_sf"/>
</dbReference>
<dbReference type="PANTHER" id="PTHR30451:SF21">
    <property type="entry name" value="FIMBRIAL USHER DOMAIN-CONTAINING PROTEIN YDET-RELATED"/>
    <property type="match status" value="1"/>
</dbReference>
<dbReference type="PANTHER" id="PTHR30451">
    <property type="entry name" value="OUTER MEMBRANE USHER PROTEIN"/>
    <property type="match status" value="1"/>
</dbReference>
<dbReference type="Pfam" id="PF13953">
    <property type="entry name" value="PapC_C"/>
    <property type="match status" value="1"/>
</dbReference>
<dbReference type="Pfam" id="PF13954">
    <property type="entry name" value="PapC_N"/>
    <property type="match status" value="1"/>
</dbReference>
<dbReference type="Pfam" id="PF00577">
    <property type="entry name" value="Usher"/>
    <property type="match status" value="1"/>
</dbReference>
<dbReference type="SUPFAM" id="SSF141729">
    <property type="entry name" value="FimD N-terminal domain-like"/>
    <property type="match status" value="1"/>
</dbReference>
<dbReference type="PROSITE" id="PS01151">
    <property type="entry name" value="FIMBRIAL_USHER"/>
    <property type="match status" value="1"/>
</dbReference>
<keyword id="KW-0998">Cell outer membrane</keyword>
<keyword id="KW-1015">Disulfide bond</keyword>
<keyword id="KW-1029">Fimbrium biogenesis</keyword>
<keyword id="KW-0472">Membrane</keyword>
<keyword id="KW-1185">Reference proteome</keyword>
<keyword id="KW-0732">Signal</keyword>
<keyword id="KW-0812">Transmembrane</keyword>
<keyword id="KW-1134">Transmembrane beta strand</keyword>
<keyword id="KW-0813">Transport</keyword>
<feature type="signal peptide" evidence="2">
    <location>
        <begin position="1"/>
        <end position="40"/>
    </location>
</feature>
<feature type="chain" id="PRO_0000009335" description="Outer membrane usher protein YraJ">
    <location>
        <begin position="41"/>
        <end position="838"/>
    </location>
</feature>
<feature type="disulfide bond" evidence="2">
    <location>
        <begin position="815"/>
        <end position="837"/>
    </location>
</feature>
<comment type="function">
    <text evidence="3">Part of the yraHIJK fimbrial operon. Could contribute to adhesion to various surfaces in specific environmental niches. Increases adhesion to eukaryotic T24 bladder epithelial cells in the absence of fim operon. Probably involved in the export and assembly of fimbrial subunits across the outer membrane.</text>
</comment>
<comment type="subcellular location">
    <subcellularLocation>
        <location evidence="1">Cell outer membrane</location>
        <topology evidence="1">Multi-pass membrane protein</topology>
    </subcellularLocation>
</comment>
<comment type="induction">
    <text evidence="3">Expression is negatively regulated by H-NS and subjected to cAMP receptor protein (CRP)-mediated catabolite repression.</text>
</comment>
<comment type="disruption phenotype">
    <text evidence="3">Deletion of the operon under classical laboratory conditions does not result in any major effect on E.coli capacity to form biofilms compared with the wild-type strain.</text>
</comment>
<comment type="miscellaneous">
    <text evidence="5">The operon is cryptic under classical laboratory conditions, but is functional when constitutively expressed.</text>
</comment>
<comment type="similarity">
    <text evidence="4">Belongs to the fimbrial export usher family.</text>
</comment>
<comment type="sequence caution" evidence="4">
    <conflict type="erroneous initiation">
        <sequence resource="EMBL-CDS" id="AAA57947"/>
    </conflict>
    <text>Extended N-terminus.</text>
</comment>
<organism>
    <name type="scientific">Escherichia coli (strain K12)</name>
    <dbReference type="NCBI Taxonomy" id="83333"/>
    <lineage>
        <taxon>Bacteria</taxon>
        <taxon>Pseudomonadati</taxon>
        <taxon>Pseudomonadota</taxon>
        <taxon>Gammaproteobacteria</taxon>
        <taxon>Enterobacterales</taxon>
        <taxon>Enterobacteriaceae</taxon>
        <taxon>Escherichia</taxon>
    </lineage>
</organism>
<sequence length="838" mass="93616">MPQRHHQGHKRTPKQLALIIKRCLPMVLTGSGMLCTTANAEEYYFDPIMLETTKSGMQTTDLSRFSKKYAQLPGTYQVDIWLNKKKVSQKKITFTANAEQLLQPQFTVEQLRELGIKVDEIPALAEKDDDSVINSLEQIIPGTAAEFDFNHQQLNLSIPQIALYRDARGYVSPSRWDDGIPTLFTNYSFTGSDNRYRQGNRSQRQYLNMQNGANFGPWRLRNYSTWTRNDQTSSWNTISSYLQRDIKALKSQLLLGESATSGSIFSSYTFTGVQLASDDNMLPNSQRGFAPTVRGIANSSAIVTIRQNGYVIYQSNVSAGAFEINDLYPSSNSGDLEVTIEESDGTQRRFIQPYSSLPMMQRPGHLKYSATAGRYRADANSDSKEPEFAEATAIYGLNNTFTLYGGLLGSEDYYALGIGIGGTLGALGALSMDINRADTQFDNQHSFHGYQWRTQYIKDIPETNTNIAVSYYRYTNDGYFSFNEANTRNWDYNSRQKSEIQFNISQTIFDGVSLYASGSQQDYWGNNDKNRNISVGVSGQQWGVGYSLNYQYSRYTDQNNDRALSLNLSIPLERWLPRSRVSYQMTSQKDRPTQHEMRLDGSLLDDGRLSYSLEQSLDDDNNHNSSLNASYRSPYGTFSAGYSYGNDSSQYNYGVTGGVVIHPHGVTLSQYLGNAFALIDANGASGVRIQNYPGIATDPFGYAVVPYLTTYQENRLSVDTTQLPDNVDLEQTTQFVVPNRGAMVAARFNANIGYRVLVTVSDRNGKPLPFGALASNDDTGQQSIVDEGGILYLSGISSKSQSWTVRWGNQADQQCQFAFSTPDSEPTTSVLQGTAQCH</sequence>
<accession>P42915</accession>
<accession>Q2M966</accession>
<name>YRAJ_ECOLI</name>